<name>OPS7_BEAB2</name>
<gene>
    <name evidence="2" type="primary">OpS7</name>
    <name type="ORF">BBA_08185</name>
</gene>
<organism>
    <name type="scientific">Beauveria bassiana (strain ARSEF 2860)</name>
    <name type="common">White muscardine disease fungus</name>
    <name type="synonym">Tritirachium shiotae</name>
    <dbReference type="NCBI Taxonomy" id="655819"/>
    <lineage>
        <taxon>Eukaryota</taxon>
        <taxon>Fungi</taxon>
        <taxon>Dikarya</taxon>
        <taxon>Ascomycota</taxon>
        <taxon>Pezizomycotina</taxon>
        <taxon>Sordariomycetes</taxon>
        <taxon>Hypocreomycetidae</taxon>
        <taxon>Hypocreales</taxon>
        <taxon>Cordycipitaceae</taxon>
        <taxon>Beauveria</taxon>
    </lineage>
</organism>
<evidence type="ECO:0000269" key="1">
    <source>
    </source>
</evidence>
<evidence type="ECO:0000303" key="2">
    <source>
    </source>
</evidence>
<evidence type="ECO:0000305" key="3"/>
<dbReference type="EC" id="1.-.-.-" evidence="1"/>
<dbReference type="EMBL" id="JH725181">
    <property type="protein sequence ID" value="EJP62798.1"/>
    <property type="molecule type" value="Genomic_DNA"/>
</dbReference>
<dbReference type="RefSeq" id="XP_008601504.1">
    <property type="nucleotide sequence ID" value="XM_008603282.1"/>
</dbReference>
<dbReference type="STRING" id="655819.J5J930"/>
<dbReference type="GeneID" id="19891197"/>
<dbReference type="HOGENOM" id="CLU_068080_0_0_1"/>
<dbReference type="InParanoid" id="J5J930"/>
<dbReference type="OrthoDB" id="6364at474943"/>
<dbReference type="Proteomes" id="UP000002762">
    <property type="component" value="Unassembled WGS sequence"/>
</dbReference>
<dbReference type="GO" id="GO:0016491">
    <property type="term" value="F:oxidoreductase activity"/>
    <property type="evidence" value="ECO:0007669"/>
    <property type="project" value="UniProtKB-KW"/>
</dbReference>
<dbReference type="Gene3D" id="2.60.120.10">
    <property type="entry name" value="Jelly Rolls"/>
    <property type="match status" value="1"/>
</dbReference>
<dbReference type="InterPro" id="IPR014710">
    <property type="entry name" value="RmlC-like_jellyroll"/>
</dbReference>
<dbReference type="InterPro" id="IPR011051">
    <property type="entry name" value="RmlC_Cupin_sf"/>
</dbReference>
<dbReference type="SUPFAM" id="SSF51182">
    <property type="entry name" value="RmlC-like cupins"/>
    <property type="match status" value="1"/>
</dbReference>
<proteinExistence type="evidence at protein level"/>
<protein>
    <recommendedName>
        <fullName evidence="2">Oxidoreductase OpS7</fullName>
        <ecNumber evidence="1">1.-.-.-</ecNumber>
    </recommendedName>
    <alternativeName>
        <fullName evidence="2">Oosporein biosynthesis protein 7</fullName>
    </alternativeName>
</protein>
<sequence length="305" mass="34292">MGFVPITLSAGQNPLTQFDGKIETHFLEPPAGTAFQIMQIYKPLPKGDKSGAYRGPPPHFHLHQTERFKVIKGRVGIEVNDKVTVLRPKDGVAICPAGNIHRFIIDVDPKHDQDGEDDEEEDDGEIVFMVNATDSGKDFVLDRIFLENWYGVRVDSFKYGTKIDFIQQCATFDGGDHYLPFPATLPEWVPMSWSVAIRTFLGFWVTVIIGRYVGGLLGYQPFYREYTTDWELAVAKMQGTWFYRRNVQTAYRAATSWKELREMVPYSDEGAANMGLADAKVGNGAAVKKAINDRAANNGEDKKNL</sequence>
<feature type="chain" id="PRO_0000438582" description="Oxidoreductase OpS7">
    <location>
        <begin position="1"/>
        <end position="305"/>
    </location>
</feature>
<accession>J5J930</accession>
<comment type="function">
    <text evidence="1">Oxidoreductase; part of the gene cluster that mediates the biosynthesis of the bibenzoquinone oosporein, a metabolite required for fungal virulence that acts by evading host immunity to facilitate fungal multiplication in insects (PubMed:26305932). The non-reducing polyketide synthase OpS1 produces orsellinic acid by condensing acetyl-CoA with 3 malonyl-CoA units (PubMed:26305932). Orsellinic acid is then hydroxylated to benzenetriol by the hydroxylase OpS4 (PubMed:26305932). The intermediate is oxidized either nonenzymatically to 5,5'-dideoxy-oosporein or enzymatically to benzenetetrol by the oxidoreductase OpS7 (PubMed:26305932). The latter is further dimerized to oosporein by the catalase OpS5 (PubMed:26305932). OpS6 probably functions en route for protecting cells against oxidative stress by scavenging any leaked free radical form of benzenetetrol by activating the thiol group of glutathione (PubMed:26305932).</text>
</comment>
<comment type="pathway">
    <text evidence="1">Secondary metabolite biosynthesis.</text>
</comment>
<comment type="induction">
    <text evidence="1">Expression is positively regulated by the oosporein cluster specific regulator OpS3 that binds the promoter at a 5'-CGGA-3' motif (PubMed:26305932). Expression is negatively regulated by the global transcription factor Msn2 that binds the stress-response element 5'-AGGGG-3' (PubMed:26305932).</text>
</comment>
<comment type="disruption phenotype">
    <text evidence="1">Impairs the conversion of 5,5'-dideoxy-oosporein into oosporein (PubMed:26305932).</text>
</comment>
<comment type="similarity">
    <text evidence="3">Belongs to the oxidoreductase OpS7 family.</text>
</comment>
<keyword id="KW-0560">Oxidoreductase</keyword>
<keyword id="KW-1185">Reference proteome</keyword>
<keyword id="KW-0843">Virulence</keyword>
<reference key="1">
    <citation type="journal article" date="2012" name="Sci. Rep.">
        <title>Genomic perspectives on the evolution of fungal entomopathogenicity in Beauveria bassiana.</title>
        <authorList>
            <person name="Xiao G."/>
            <person name="Ying S.-H."/>
            <person name="Zheng P."/>
            <person name="Wang Z.-L."/>
            <person name="Zhang S."/>
            <person name="Xie X.-Q."/>
            <person name="Shang Y."/>
            <person name="St Leger R.J."/>
            <person name="Zhao G.-P."/>
            <person name="Wang C."/>
            <person name="Feng M.-G."/>
        </authorList>
    </citation>
    <scope>NUCLEOTIDE SEQUENCE [LARGE SCALE GENOMIC DNA]</scope>
    <source>
        <strain>ARSEF 2860</strain>
    </source>
</reference>
<reference key="2">
    <citation type="journal article" date="2015" name="Proc. Natl. Acad. Sci. U.S.A.">
        <title>Fungal biosynthesis of the bibenzoquinone oosporein to evade insect immunity.</title>
        <authorList>
            <person name="Feng P."/>
            <person name="Shang Y."/>
            <person name="Cen K."/>
            <person name="Wang C."/>
        </authorList>
    </citation>
    <scope>FUNCTION</scope>
    <scope>DISRUPTION PHENOTYPE</scope>
    <scope>INDUCTION</scope>
    <scope>CATALYTIC ACTIVITY</scope>
    <scope>PATHWAY</scope>
</reference>